<keyword id="KW-0456">Lyase</keyword>
<organism>
    <name type="scientific">Bordetella bronchiseptica (strain ATCC BAA-588 / NCTC 13252 / RB50)</name>
    <name type="common">Alcaligenes bronchisepticus</name>
    <dbReference type="NCBI Taxonomy" id="257310"/>
    <lineage>
        <taxon>Bacteria</taxon>
        <taxon>Pseudomonadati</taxon>
        <taxon>Pseudomonadota</taxon>
        <taxon>Betaproteobacteria</taxon>
        <taxon>Burkholderiales</taxon>
        <taxon>Alcaligenaceae</taxon>
        <taxon>Bordetella</taxon>
    </lineage>
</organism>
<name>ECTC_BORBR</name>
<proteinExistence type="inferred from homology"/>
<accession>Q7WHI9</accession>
<sequence>MIVRNVKDVMGTEDEVRTDTWVSRRVLLKKDGMGFSFHETTIFPGTRTHIHYKNHLEAVWCIEGDGSIETIADGKTYELGPGVVYALNENDEHWLCGGKQPLRVICVFNPPLTGQEVHDAEGVYALVEEAA</sequence>
<protein>
    <recommendedName>
        <fullName evidence="1">L-ectoine synthase</fullName>
        <ecNumber evidence="1">4.2.1.108</ecNumber>
    </recommendedName>
    <alternativeName>
        <fullName evidence="1">N-acetyldiaminobutyrate dehydratase</fullName>
    </alternativeName>
</protein>
<evidence type="ECO:0000255" key="1">
    <source>
        <dbReference type="HAMAP-Rule" id="MF_01255"/>
    </source>
</evidence>
<feature type="chain" id="PRO_0000220148" description="L-ectoine synthase">
    <location>
        <begin position="1"/>
        <end position="131"/>
    </location>
</feature>
<reference key="1">
    <citation type="journal article" date="2003" name="Nat. Genet.">
        <title>Comparative analysis of the genome sequences of Bordetella pertussis, Bordetella parapertussis and Bordetella bronchiseptica.</title>
        <authorList>
            <person name="Parkhill J."/>
            <person name="Sebaihia M."/>
            <person name="Preston A."/>
            <person name="Murphy L.D."/>
            <person name="Thomson N.R."/>
            <person name="Harris D.E."/>
            <person name="Holden M.T.G."/>
            <person name="Churcher C.M."/>
            <person name="Bentley S.D."/>
            <person name="Mungall K.L."/>
            <person name="Cerdeno-Tarraga A.-M."/>
            <person name="Temple L."/>
            <person name="James K.D."/>
            <person name="Harris B."/>
            <person name="Quail M.A."/>
            <person name="Achtman M."/>
            <person name="Atkin R."/>
            <person name="Baker S."/>
            <person name="Basham D."/>
            <person name="Bason N."/>
            <person name="Cherevach I."/>
            <person name="Chillingworth T."/>
            <person name="Collins M."/>
            <person name="Cronin A."/>
            <person name="Davis P."/>
            <person name="Doggett J."/>
            <person name="Feltwell T."/>
            <person name="Goble A."/>
            <person name="Hamlin N."/>
            <person name="Hauser H."/>
            <person name="Holroyd S."/>
            <person name="Jagels K."/>
            <person name="Leather S."/>
            <person name="Moule S."/>
            <person name="Norberczak H."/>
            <person name="O'Neil S."/>
            <person name="Ormond D."/>
            <person name="Price C."/>
            <person name="Rabbinowitsch E."/>
            <person name="Rutter S."/>
            <person name="Sanders M."/>
            <person name="Saunders D."/>
            <person name="Seeger K."/>
            <person name="Sharp S."/>
            <person name="Simmonds M."/>
            <person name="Skelton J."/>
            <person name="Squares R."/>
            <person name="Squares S."/>
            <person name="Stevens K."/>
            <person name="Unwin L."/>
            <person name="Whitehead S."/>
            <person name="Barrell B.G."/>
            <person name="Maskell D.J."/>
        </authorList>
    </citation>
    <scope>NUCLEOTIDE SEQUENCE [LARGE SCALE GENOMIC DNA]</scope>
    <source>
        <strain>ATCC BAA-588 / NCTC 13252 / RB50</strain>
    </source>
</reference>
<gene>
    <name evidence="1" type="primary">ectC</name>
    <name type="ordered locus">BB3218</name>
</gene>
<comment type="function">
    <text evidence="1">Catalyzes the circularization of gamma-N-acetyl-alpha,gamma-diaminobutyric acid (ADABA) to ectoine (1,4,5,6-tetrahydro-2-methyl-4-pyrimidine carboxylic acid), which is an excellent osmoprotectant.</text>
</comment>
<comment type="catalytic activity">
    <reaction evidence="1">
        <text>(2S)-4-acetamido-2-aminobutanoate = L-ectoine + H2O</text>
        <dbReference type="Rhea" id="RHEA:17281"/>
        <dbReference type="ChEBI" id="CHEBI:15377"/>
        <dbReference type="ChEBI" id="CHEBI:58515"/>
        <dbReference type="ChEBI" id="CHEBI:58929"/>
        <dbReference type="EC" id="4.2.1.108"/>
    </reaction>
</comment>
<comment type="pathway">
    <text evidence="1">Amine and polyamine biosynthesis; ectoine biosynthesis; L-ectoine from L-aspartate 4-semialdehyde: step 3/3.</text>
</comment>
<comment type="similarity">
    <text evidence="1">Belongs to the ectoine synthase family.</text>
</comment>
<dbReference type="EC" id="4.2.1.108" evidence="1"/>
<dbReference type="EMBL" id="BX640446">
    <property type="protein sequence ID" value="CAE33710.1"/>
    <property type="molecule type" value="Genomic_DNA"/>
</dbReference>
<dbReference type="RefSeq" id="WP_003810601.1">
    <property type="nucleotide sequence ID" value="NC_002927.3"/>
</dbReference>
<dbReference type="SMR" id="Q7WHI9"/>
<dbReference type="DNASU" id="2662599"/>
<dbReference type="KEGG" id="bbr:BB3218"/>
<dbReference type="eggNOG" id="COG0662">
    <property type="taxonomic scope" value="Bacteria"/>
</dbReference>
<dbReference type="HOGENOM" id="CLU_154525_0_0_4"/>
<dbReference type="UniPathway" id="UPA00067">
    <property type="reaction ID" value="UER00123"/>
</dbReference>
<dbReference type="Proteomes" id="UP000001027">
    <property type="component" value="Chromosome"/>
</dbReference>
<dbReference type="GO" id="GO:0033990">
    <property type="term" value="F:ectoine synthase activity"/>
    <property type="evidence" value="ECO:0007669"/>
    <property type="project" value="UniProtKB-EC"/>
</dbReference>
<dbReference type="GO" id="GO:0019491">
    <property type="term" value="P:ectoine biosynthetic process"/>
    <property type="evidence" value="ECO:0007669"/>
    <property type="project" value="UniProtKB-UniRule"/>
</dbReference>
<dbReference type="CDD" id="cd06978">
    <property type="entry name" value="cupin_EctC"/>
    <property type="match status" value="1"/>
</dbReference>
<dbReference type="Gene3D" id="2.60.120.10">
    <property type="entry name" value="Jelly Rolls"/>
    <property type="match status" value="1"/>
</dbReference>
<dbReference type="HAMAP" id="MF_01255">
    <property type="entry name" value="Ectoine_synth"/>
    <property type="match status" value="1"/>
</dbReference>
<dbReference type="InterPro" id="IPR010462">
    <property type="entry name" value="Ectoine_synth"/>
</dbReference>
<dbReference type="InterPro" id="IPR014710">
    <property type="entry name" value="RmlC-like_jellyroll"/>
</dbReference>
<dbReference type="InterPro" id="IPR011051">
    <property type="entry name" value="RmlC_Cupin_sf"/>
</dbReference>
<dbReference type="NCBIfam" id="NF009806">
    <property type="entry name" value="PRK13290.1"/>
    <property type="match status" value="1"/>
</dbReference>
<dbReference type="PANTHER" id="PTHR39289">
    <property type="match status" value="1"/>
</dbReference>
<dbReference type="PANTHER" id="PTHR39289:SF1">
    <property type="entry name" value="L-ECTOINE SYNTHASE"/>
    <property type="match status" value="1"/>
</dbReference>
<dbReference type="Pfam" id="PF06339">
    <property type="entry name" value="Ectoine_synth"/>
    <property type="match status" value="1"/>
</dbReference>
<dbReference type="SUPFAM" id="SSF51182">
    <property type="entry name" value="RmlC-like cupins"/>
    <property type="match status" value="1"/>
</dbReference>